<comment type="function">
    <text evidence="1">Specifically methylates guanosine-37 in various tRNAs.</text>
</comment>
<comment type="catalytic activity">
    <reaction evidence="1">
        <text>guanosine(37) in tRNA + S-adenosyl-L-methionine = N(1)-methylguanosine(37) in tRNA + S-adenosyl-L-homocysteine + H(+)</text>
        <dbReference type="Rhea" id="RHEA:36899"/>
        <dbReference type="Rhea" id="RHEA-COMP:10145"/>
        <dbReference type="Rhea" id="RHEA-COMP:10147"/>
        <dbReference type="ChEBI" id="CHEBI:15378"/>
        <dbReference type="ChEBI" id="CHEBI:57856"/>
        <dbReference type="ChEBI" id="CHEBI:59789"/>
        <dbReference type="ChEBI" id="CHEBI:73542"/>
        <dbReference type="ChEBI" id="CHEBI:74269"/>
        <dbReference type="EC" id="2.1.1.228"/>
    </reaction>
</comment>
<comment type="subunit">
    <text evidence="1">Homodimer.</text>
</comment>
<comment type="subcellular location">
    <subcellularLocation>
        <location evidence="1">Cytoplasm</location>
    </subcellularLocation>
</comment>
<comment type="similarity">
    <text evidence="1">Belongs to the RNA methyltransferase TrmD family.</text>
</comment>
<organism>
    <name type="scientific">Clostridium botulinum (strain ATCC 19397 / Type A)</name>
    <dbReference type="NCBI Taxonomy" id="441770"/>
    <lineage>
        <taxon>Bacteria</taxon>
        <taxon>Bacillati</taxon>
        <taxon>Bacillota</taxon>
        <taxon>Clostridia</taxon>
        <taxon>Eubacteriales</taxon>
        <taxon>Clostridiaceae</taxon>
        <taxon>Clostridium</taxon>
    </lineage>
</organism>
<protein>
    <recommendedName>
        <fullName evidence="1">tRNA (guanine-N(1)-)-methyltransferase</fullName>
        <ecNumber evidence="1">2.1.1.228</ecNumber>
    </recommendedName>
    <alternativeName>
        <fullName evidence="1">M1G-methyltransferase</fullName>
    </alternativeName>
    <alternativeName>
        <fullName evidence="1">tRNA [GM37] methyltransferase</fullName>
    </alternativeName>
</protein>
<proteinExistence type="inferred from homology"/>
<evidence type="ECO:0000255" key="1">
    <source>
        <dbReference type="HAMAP-Rule" id="MF_00605"/>
    </source>
</evidence>
<sequence length="240" mass="27409">MRIDVLTLFPEMFSIFNHSIIGRAIEKEILKINTVNIRDYTIDKHKKVDDYPYGGGAGMVMSVQPIVDSIKAVKKENKGKVIFLGPKGKTFNQNLAKELAKEEELIFLCGHYEGIDERAYEYIDMEISLGDFVLTGGEMACIPIVDSICRLVDGVLGSSESYEDESFYNGLLEYPQYTRPAIYEGKSVPEVLLSGHHENIKKWRKAKSLIITDKVRPDLFKKYKLTEEDKKILKDFNKKL</sequence>
<accession>A7FW09</accession>
<reference key="1">
    <citation type="journal article" date="2007" name="PLoS ONE">
        <title>Analysis of the neurotoxin complex genes in Clostridium botulinum A1-A4 and B1 strains: BoNT/A3, /Ba4 and /B1 clusters are located within plasmids.</title>
        <authorList>
            <person name="Smith T.J."/>
            <person name="Hill K.K."/>
            <person name="Foley B.T."/>
            <person name="Detter J.C."/>
            <person name="Munk A.C."/>
            <person name="Bruce D.C."/>
            <person name="Doggett N.A."/>
            <person name="Smith L.A."/>
            <person name="Marks J.D."/>
            <person name="Xie G."/>
            <person name="Brettin T.S."/>
        </authorList>
    </citation>
    <scope>NUCLEOTIDE SEQUENCE [LARGE SCALE GENOMIC DNA]</scope>
    <source>
        <strain>ATCC 19397 / Type A</strain>
    </source>
</reference>
<gene>
    <name evidence="1" type="primary">trmD</name>
    <name type="ordered locus">CLB_2309</name>
</gene>
<feature type="chain" id="PRO_1000006470" description="tRNA (guanine-N(1)-)-methyltransferase">
    <location>
        <begin position="1"/>
        <end position="240"/>
    </location>
</feature>
<feature type="binding site" evidence="1">
    <location>
        <position position="110"/>
    </location>
    <ligand>
        <name>S-adenosyl-L-methionine</name>
        <dbReference type="ChEBI" id="CHEBI:59789"/>
    </ligand>
</feature>
<feature type="binding site" evidence="1">
    <location>
        <begin position="129"/>
        <end position="134"/>
    </location>
    <ligand>
        <name>S-adenosyl-L-methionine</name>
        <dbReference type="ChEBI" id="CHEBI:59789"/>
    </ligand>
</feature>
<keyword id="KW-0963">Cytoplasm</keyword>
<keyword id="KW-0489">Methyltransferase</keyword>
<keyword id="KW-0949">S-adenosyl-L-methionine</keyword>
<keyword id="KW-0808">Transferase</keyword>
<keyword id="KW-0819">tRNA processing</keyword>
<name>TRMD_CLOB1</name>
<dbReference type="EC" id="2.1.1.228" evidence="1"/>
<dbReference type="EMBL" id="CP000726">
    <property type="protein sequence ID" value="ABS35167.1"/>
    <property type="molecule type" value="Genomic_DNA"/>
</dbReference>
<dbReference type="RefSeq" id="WP_003384686.1">
    <property type="nucleotide sequence ID" value="NC_009697.1"/>
</dbReference>
<dbReference type="SMR" id="A7FW09"/>
<dbReference type="GeneID" id="5186700"/>
<dbReference type="KEGG" id="cba:CLB_2309"/>
<dbReference type="HOGENOM" id="CLU_047363_0_1_9"/>
<dbReference type="GO" id="GO:0005829">
    <property type="term" value="C:cytosol"/>
    <property type="evidence" value="ECO:0007669"/>
    <property type="project" value="TreeGrafter"/>
</dbReference>
<dbReference type="GO" id="GO:0052906">
    <property type="term" value="F:tRNA (guanine(37)-N1)-methyltransferase activity"/>
    <property type="evidence" value="ECO:0007669"/>
    <property type="project" value="UniProtKB-UniRule"/>
</dbReference>
<dbReference type="GO" id="GO:0002939">
    <property type="term" value="P:tRNA N1-guanine methylation"/>
    <property type="evidence" value="ECO:0007669"/>
    <property type="project" value="TreeGrafter"/>
</dbReference>
<dbReference type="CDD" id="cd18080">
    <property type="entry name" value="TrmD-like"/>
    <property type="match status" value="1"/>
</dbReference>
<dbReference type="FunFam" id="1.10.1270.20:FF:000001">
    <property type="entry name" value="tRNA (guanine-N(1)-)-methyltransferase"/>
    <property type="match status" value="1"/>
</dbReference>
<dbReference type="FunFam" id="3.40.1280.10:FF:000001">
    <property type="entry name" value="tRNA (guanine-N(1)-)-methyltransferase"/>
    <property type="match status" value="1"/>
</dbReference>
<dbReference type="Gene3D" id="3.40.1280.10">
    <property type="match status" value="1"/>
</dbReference>
<dbReference type="Gene3D" id="1.10.1270.20">
    <property type="entry name" value="tRNA(m1g37)methyltransferase, domain 2"/>
    <property type="match status" value="1"/>
</dbReference>
<dbReference type="HAMAP" id="MF_00605">
    <property type="entry name" value="TrmD"/>
    <property type="match status" value="1"/>
</dbReference>
<dbReference type="InterPro" id="IPR029028">
    <property type="entry name" value="Alpha/beta_knot_MTases"/>
</dbReference>
<dbReference type="InterPro" id="IPR023148">
    <property type="entry name" value="tRNA_m1G_MeTrfase_C_sf"/>
</dbReference>
<dbReference type="InterPro" id="IPR002649">
    <property type="entry name" value="tRNA_m1G_MeTrfase_TrmD"/>
</dbReference>
<dbReference type="InterPro" id="IPR029026">
    <property type="entry name" value="tRNA_m1G_MTases_N"/>
</dbReference>
<dbReference type="InterPro" id="IPR016009">
    <property type="entry name" value="tRNA_MeTrfase_TRMD/TRM10"/>
</dbReference>
<dbReference type="NCBIfam" id="NF000648">
    <property type="entry name" value="PRK00026.1"/>
    <property type="match status" value="1"/>
</dbReference>
<dbReference type="NCBIfam" id="TIGR00088">
    <property type="entry name" value="trmD"/>
    <property type="match status" value="1"/>
</dbReference>
<dbReference type="PANTHER" id="PTHR46417">
    <property type="entry name" value="TRNA (GUANINE-N(1)-)-METHYLTRANSFERASE"/>
    <property type="match status" value="1"/>
</dbReference>
<dbReference type="PANTHER" id="PTHR46417:SF1">
    <property type="entry name" value="TRNA (GUANINE-N(1)-)-METHYLTRANSFERASE"/>
    <property type="match status" value="1"/>
</dbReference>
<dbReference type="Pfam" id="PF01746">
    <property type="entry name" value="tRNA_m1G_MT"/>
    <property type="match status" value="1"/>
</dbReference>
<dbReference type="PIRSF" id="PIRSF000386">
    <property type="entry name" value="tRNA_mtase"/>
    <property type="match status" value="1"/>
</dbReference>
<dbReference type="SUPFAM" id="SSF75217">
    <property type="entry name" value="alpha/beta knot"/>
    <property type="match status" value="1"/>
</dbReference>